<gene>
    <name evidence="1" type="primary">rplP</name>
    <name type="ordered locus">ACIAD3212</name>
</gene>
<evidence type="ECO:0000255" key="1">
    <source>
        <dbReference type="HAMAP-Rule" id="MF_01342"/>
    </source>
</evidence>
<evidence type="ECO:0000305" key="2"/>
<keyword id="KW-0687">Ribonucleoprotein</keyword>
<keyword id="KW-0689">Ribosomal protein</keyword>
<keyword id="KW-0694">RNA-binding</keyword>
<keyword id="KW-0699">rRNA-binding</keyword>
<keyword id="KW-0820">tRNA-binding</keyword>
<comment type="function">
    <text evidence="1">Binds 23S rRNA and is also seen to make contacts with the A and possibly P site tRNAs.</text>
</comment>
<comment type="subunit">
    <text evidence="1">Part of the 50S ribosomal subunit.</text>
</comment>
<comment type="similarity">
    <text evidence="1">Belongs to the universal ribosomal protein uL16 family.</text>
</comment>
<reference key="1">
    <citation type="journal article" date="2004" name="Nucleic Acids Res.">
        <title>Unique features revealed by the genome sequence of Acinetobacter sp. ADP1, a versatile and naturally transformation competent bacterium.</title>
        <authorList>
            <person name="Barbe V."/>
            <person name="Vallenet D."/>
            <person name="Fonknechten N."/>
            <person name="Kreimeyer A."/>
            <person name="Oztas S."/>
            <person name="Labarre L."/>
            <person name="Cruveiller S."/>
            <person name="Robert C."/>
            <person name="Duprat S."/>
            <person name="Wincker P."/>
            <person name="Ornston L.N."/>
            <person name="Weissenbach J."/>
            <person name="Marliere P."/>
            <person name="Cohen G.N."/>
            <person name="Medigue C."/>
        </authorList>
    </citation>
    <scope>NUCLEOTIDE SEQUENCE [LARGE SCALE GENOMIC DNA]</scope>
    <source>
        <strain>ATCC 33305 / BD413 / ADP1</strain>
    </source>
</reference>
<name>RL16_ACIAD</name>
<accession>Q6F7R9</accession>
<sequence length="137" mass="15458">MLQPKRTKFRKVQKGRNTGLAHRGSTVSFGSIAIKATERGRMTARQIEAARRTISRRIKRGGKIFIRVFPDKPITEKPLEVRMGNGKGNVEYWVCEIKPGKILYEIEGVNDELATQAFKLAAAKLPFKTTIVTRTVM</sequence>
<organism>
    <name type="scientific">Acinetobacter baylyi (strain ATCC 33305 / BD413 / ADP1)</name>
    <dbReference type="NCBI Taxonomy" id="62977"/>
    <lineage>
        <taxon>Bacteria</taxon>
        <taxon>Pseudomonadati</taxon>
        <taxon>Pseudomonadota</taxon>
        <taxon>Gammaproteobacteria</taxon>
        <taxon>Moraxellales</taxon>
        <taxon>Moraxellaceae</taxon>
        <taxon>Acinetobacter</taxon>
    </lineage>
</organism>
<proteinExistence type="inferred from homology"/>
<feature type="chain" id="PRO_0000062027" description="Large ribosomal subunit protein uL16">
    <location>
        <begin position="1"/>
        <end position="137"/>
    </location>
</feature>
<protein>
    <recommendedName>
        <fullName evidence="1">Large ribosomal subunit protein uL16</fullName>
    </recommendedName>
    <alternativeName>
        <fullName evidence="2">50S ribosomal protein L16</fullName>
    </alternativeName>
</protein>
<dbReference type="EMBL" id="CR543861">
    <property type="protein sequence ID" value="CAG69896.1"/>
    <property type="molecule type" value="Genomic_DNA"/>
</dbReference>
<dbReference type="RefSeq" id="WP_004924112.1">
    <property type="nucleotide sequence ID" value="NC_005966.1"/>
</dbReference>
<dbReference type="SMR" id="Q6F7R9"/>
<dbReference type="STRING" id="202950.GCA_001485005_02943"/>
<dbReference type="GeneID" id="45235427"/>
<dbReference type="KEGG" id="aci:ACIAD3212"/>
<dbReference type="eggNOG" id="COG0197">
    <property type="taxonomic scope" value="Bacteria"/>
</dbReference>
<dbReference type="HOGENOM" id="CLU_078858_2_1_6"/>
<dbReference type="OrthoDB" id="9802589at2"/>
<dbReference type="BioCyc" id="ASP62977:ACIAD_RS14560-MONOMER"/>
<dbReference type="Proteomes" id="UP000000430">
    <property type="component" value="Chromosome"/>
</dbReference>
<dbReference type="GO" id="GO:0022625">
    <property type="term" value="C:cytosolic large ribosomal subunit"/>
    <property type="evidence" value="ECO:0007669"/>
    <property type="project" value="TreeGrafter"/>
</dbReference>
<dbReference type="GO" id="GO:0019843">
    <property type="term" value="F:rRNA binding"/>
    <property type="evidence" value="ECO:0007669"/>
    <property type="project" value="UniProtKB-UniRule"/>
</dbReference>
<dbReference type="GO" id="GO:0003735">
    <property type="term" value="F:structural constituent of ribosome"/>
    <property type="evidence" value="ECO:0007669"/>
    <property type="project" value="InterPro"/>
</dbReference>
<dbReference type="GO" id="GO:0000049">
    <property type="term" value="F:tRNA binding"/>
    <property type="evidence" value="ECO:0007669"/>
    <property type="project" value="UniProtKB-KW"/>
</dbReference>
<dbReference type="GO" id="GO:0006412">
    <property type="term" value="P:translation"/>
    <property type="evidence" value="ECO:0007669"/>
    <property type="project" value="UniProtKB-UniRule"/>
</dbReference>
<dbReference type="CDD" id="cd01433">
    <property type="entry name" value="Ribosomal_L16_L10e"/>
    <property type="match status" value="1"/>
</dbReference>
<dbReference type="FunFam" id="3.90.1170.10:FF:000001">
    <property type="entry name" value="50S ribosomal protein L16"/>
    <property type="match status" value="1"/>
</dbReference>
<dbReference type="Gene3D" id="3.90.1170.10">
    <property type="entry name" value="Ribosomal protein L10e/L16"/>
    <property type="match status" value="1"/>
</dbReference>
<dbReference type="HAMAP" id="MF_01342">
    <property type="entry name" value="Ribosomal_uL16"/>
    <property type="match status" value="1"/>
</dbReference>
<dbReference type="InterPro" id="IPR047873">
    <property type="entry name" value="Ribosomal_uL16"/>
</dbReference>
<dbReference type="InterPro" id="IPR000114">
    <property type="entry name" value="Ribosomal_uL16_bact-type"/>
</dbReference>
<dbReference type="InterPro" id="IPR020798">
    <property type="entry name" value="Ribosomal_uL16_CS"/>
</dbReference>
<dbReference type="InterPro" id="IPR016180">
    <property type="entry name" value="Ribosomal_uL16_dom"/>
</dbReference>
<dbReference type="InterPro" id="IPR036920">
    <property type="entry name" value="Ribosomal_uL16_sf"/>
</dbReference>
<dbReference type="NCBIfam" id="TIGR01164">
    <property type="entry name" value="rplP_bact"/>
    <property type="match status" value="1"/>
</dbReference>
<dbReference type="PANTHER" id="PTHR12220">
    <property type="entry name" value="50S/60S RIBOSOMAL PROTEIN L16"/>
    <property type="match status" value="1"/>
</dbReference>
<dbReference type="PANTHER" id="PTHR12220:SF13">
    <property type="entry name" value="LARGE RIBOSOMAL SUBUNIT PROTEIN UL16M"/>
    <property type="match status" value="1"/>
</dbReference>
<dbReference type="Pfam" id="PF00252">
    <property type="entry name" value="Ribosomal_L16"/>
    <property type="match status" value="1"/>
</dbReference>
<dbReference type="PRINTS" id="PR00060">
    <property type="entry name" value="RIBOSOMALL16"/>
</dbReference>
<dbReference type="SUPFAM" id="SSF54686">
    <property type="entry name" value="Ribosomal protein L16p/L10e"/>
    <property type="match status" value="1"/>
</dbReference>
<dbReference type="PROSITE" id="PS00701">
    <property type="entry name" value="RIBOSOMAL_L16_2"/>
    <property type="match status" value="1"/>
</dbReference>